<proteinExistence type="predicted"/>
<protein>
    <recommendedName>
        <fullName>Uncharacterized 18.6 kDa protein in alpha-glucosidase 3'region</fullName>
    </recommendedName>
    <alternativeName>
        <fullName>ORF2</fullName>
    </alternativeName>
</protein>
<dbReference type="EMBL" id="X56024">
    <property type="protein sequence ID" value="CAA39502.1"/>
    <property type="molecule type" value="Genomic_DNA"/>
</dbReference>
<dbReference type="PIR" id="S19687">
    <property type="entry name" value="S19687"/>
</dbReference>
<dbReference type="SMR" id="P29065"/>
<organism>
    <name type="scientific">Candida tsukubaensis</name>
    <name type="common">Yeast</name>
    <name type="synonym">Pseudozyma tsukubaensis</name>
    <dbReference type="NCBI Taxonomy" id="5483"/>
    <lineage>
        <taxon>Eukaryota</taxon>
        <taxon>Fungi</taxon>
        <taxon>Dikarya</taxon>
        <taxon>Basidiomycota</taxon>
        <taxon>Ustilaginomycotina</taxon>
        <taxon>Ustilaginomycetes</taxon>
        <taxon>Ustilaginales</taxon>
        <taxon>Ustilaginaceae</taxon>
        <taxon>Pseudozyma</taxon>
    </lineage>
</organism>
<evidence type="ECO:0000256" key="1">
    <source>
        <dbReference type="SAM" id="MobiDB-lite"/>
    </source>
</evidence>
<accession>P29065</accession>
<name>YAGL_CANTS</name>
<feature type="chain" id="PRO_0000066115" description="Uncharacterized 18.6 kDa protein in alpha-glucosidase 3'region">
    <location>
        <begin position="1"/>
        <end position="170"/>
    </location>
</feature>
<feature type="region of interest" description="Disordered" evidence="1">
    <location>
        <begin position="35"/>
        <end position="57"/>
    </location>
</feature>
<sequence length="170" mass="18555">MSAPQTTGDRAVIKLLSDALKALNLQNLAQTQFQEEVMPATAPSTDPAVPKDAQEADEPSIDALKSKIAGYERMFAFNCQLLGYLMEEIDGGSPDWMKVPCYLFLIIQSSTLTPIATGAIPKGMVKDVISRLPPKYKERCHAADKNEDWQALMLGITDLMDVVSLSLPPS</sequence>
<reference key="1">
    <citation type="journal article" date="1991" name="Eur. J. Biochem.">
        <title>Primary structure and processing of the Candida tsukubaensis alpha-glucosidase. Homology with the rabbit intestinal sucrase-isomaltase complex and human lysosomal alpha-glucosidase.</title>
        <authorList>
            <person name="Kinsella B.T."/>
            <person name="Hogan S."/>
            <person name="Larkin A."/>
            <person name="Cantwell B.A."/>
        </authorList>
    </citation>
    <scope>NUCLEOTIDE SEQUENCE [GENOMIC DNA]</scope>
    <source>
        <strain>CBS 6389</strain>
    </source>
</reference>